<sequence length="322" mass="35665">MTTPQEDGFLRLKIASKEKIARDIWSFELTDPQGAPLPPFEAGANLTVAVPNGSRRTYSLCNDSQERNRYVIAVKRDSNGRGGSISFIDDTSEGDAVEVSLPRNEFPLDKRAKSFILVAGGIGITPMLSMARQLRAEGLRSFRLYYLTRDPEGTAFFDELTSDEWRSDVKIHHDHGDPTKAFDFWSVFEKSKPAQHVYCCGPQALMDTVRDMTGHWPSGTVHFESFGATNTNARENTPFTVRLSRSGTSFEIPANRSILEVLRDANVRVPSSCESGTCGSCKTALCSGEADHRDMVLRDDEKGTQIMVCVSRAKSAELVLDL</sequence>
<keyword id="KW-0001">2Fe-2S</keyword>
<keyword id="KW-0002">3D-structure</keyword>
<keyword id="KW-0903">Direct protein sequencing</keyword>
<keyword id="KW-0249">Electron transport</keyword>
<keyword id="KW-0285">Flavoprotein</keyword>
<keyword id="KW-0288">FMN</keyword>
<keyword id="KW-0408">Iron</keyword>
<keyword id="KW-0411">Iron-sulfur</keyword>
<keyword id="KW-0479">Metal-binding</keyword>
<keyword id="KW-0520">NAD</keyword>
<keyword id="KW-0560">Oxidoreductase</keyword>
<keyword id="KW-0813">Transport</keyword>
<reference key="1">
    <citation type="journal article" date="1998" name="J. Bacteriol.">
        <title>Novel organization of the genes for phthalate degradation from Burkholderia cepacia DBO1.</title>
        <authorList>
            <person name="Chang H.K."/>
            <person name="Zylstra G.J."/>
        </authorList>
    </citation>
    <scope>NUCLEOTIDE SEQUENCE [GENOMIC DNA]</scope>
    <source>
        <strain>ATCC 29424 / DBO1</strain>
    </source>
</reference>
<reference key="2">
    <citation type="journal article" date="1992" name="Science">
        <title>Phthalate dioxygenase reductase: a modular structure for electron transfer from pyridine nucleotides to [2Fe-2S].</title>
        <authorList>
            <person name="Correll C.C."/>
            <person name="Batie C.J."/>
            <person name="Ballou D.P."/>
            <person name="Ludwig M.L."/>
        </authorList>
    </citation>
    <scope>X-RAY CRYSTALLOGRAPHY (2.0 ANGSTROMS) IN COMPLEX WITH FMN AND IRON-SULFUR (2FE-2S)</scope>
    <scope>PARTIAL PROTEIN SEQUENCE</scope>
    <source>
        <strain>ATCC 29424 / DBO1</strain>
    </source>
</reference>
<gene>
    <name type="primary">ophA1</name>
</gene>
<accession>P33164</accession>
<accession>Q9ZFR3</accession>
<evidence type="ECO:0000255" key="1">
    <source>
        <dbReference type="PROSITE-ProRule" id="PRU00465"/>
    </source>
</evidence>
<evidence type="ECO:0000255" key="2">
    <source>
        <dbReference type="PROSITE-ProRule" id="PRU00716"/>
    </source>
</evidence>
<evidence type="ECO:0000269" key="3">
    <source>
    </source>
</evidence>
<evidence type="ECO:0000305" key="4"/>
<evidence type="ECO:0007744" key="5">
    <source>
        <dbReference type="PDB" id="2PIA"/>
    </source>
</evidence>
<evidence type="ECO:0007829" key="6">
    <source>
        <dbReference type="PDB" id="2PIA"/>
    </source>
</evidence>
<protein>
    <recommendedName>
        <fullName>Phthalate dioxygenase reductase</fullName>
        <shortName>PDR</shortName>
        <ecNumber>1.-.-.-</ecNumber>
    </recommendedName>
</protein>
<proteinExistence type="evidence at protein level"/>
<feature type="initiator methionine" description="Removed">
    <location>
        <position position="1"/>
    </location>
</feature>
<feature type="chain" id="PRO_0000189398" description="Phthalate dioxygenase reductase">
    <location>
        <begin position="2"/>
        <end position="322"/>
    </location>
</feature>
<feature type="domain" description="FAD-binding FR-type" evidence="2">
    <location>
        <begin position="7"/>
        <end position="109"/>
    </location>
</feature>
<feature type="domain" description="2Fe-2S ferredoxin-type" evidence="1">
    <location>
        <begin position="239"/>
        <end position="322"/>
    </location>
</feature>
<feature type="binding site" evidence="3 5">
    <location>
        <begin position="56"/>
        <end position="57"/>
    </location>
    <ligand>
        <name>FMN</name>
        <dbReference type="ChEBI" id="CHEBI:58210"/>
    </ligand>
</feature>
<feature type="binding site" evidence="3 5">
    <location>
        <begin position="73"/>
        <end position="75"/>
    </location>
    <ligand>
        <name>FMN</name>
        <dbReference type="ChEBI" id="CHEBI:58210"/>
    </ligand>
</feature>
<feature type="binding site" evidence="3 5">
    <location>
        <begin position="81"/>
        <end position="84"/>
    </location>
    <ligand>
        <name>FMN</name>
        <dbReference type="ChEBI" id="CHEBI:58210"/>
    </ligand>
</feature>
<feature type="binding site" evidence="3 5">
    <location>
        <position position="125"/>
    </location>
    <ligand>
        <name>FMN</name>
        <dbReference type="ChEBI" id="CHEBI:58210"/>
    </ligand>
</feature>
<feature type="binding site" evidence="3 5">
    <location>
        <position position="226"/>
    </location>
    <ligand>
        <name>FMN</name>
        <dbReference type="ChEBI" id="CHEBI:58210"/>
    </ligand>
</feature>
<feature type="binding site" evidence="3 5">
    <location>
        <position position="273"/>
    </location>
    <ligand>
        <name>[2Fe-2S] cluster</name>
        <dbReference type="ChEBI" id="CHEBI:190135"/>
    </ligand>
</feature>
<feature type="binding site" evidence="3 5">
    <location>
        <position position="275"/>
    </location>
    <ligand>
        <name>FMN</name>
        <dbReference type="ChEBI" id="CHEBI:58210"/>
    </ligand>
</feature>
<feature type="binding site" evidence="3 5">
    <location>
        <position position="278"/>
    </location>
    <ligand>
        <name>[2Fe-2S] cluster</name>
        <dbReference type="ChEBI" id="CHEBI:190135"/>
    </ligand>
</feature>
<feature type="binding site" evidence="3 5">
    <location>
        <position position="281"/>
    </location>
    <ligand>
        <name>[2Fe-2S] cluster</name>
        <dbReference type="ChEBI" id="CHEBI:190135"/>
    </ligand>
</feature>
<feature type="binding site" evidence="3 5">
    <location>
        <position position="309"/>
    </location>
    <ligand>
        <name>[2Fe-2S] cluster</name>
        <dbReference type="ChEBI" id="CHEBI:190135"/>
    </ligand>
</feature>
<feature type="turn" evidence="6">
    <location>
        <begin position="4"/>
        <end position="8"/>
    </location>
</feature>
<feature type="strand" evidence="6">
    <location>
        <begin position="10"/>
        <end position="21"/>
    </location>
</feature>
<feature type="strand" evidence="6">
    <location>
        <begin position="24"/>
        <end position="30"/>
    </location>
</feature>
<feature type="strand" evidence="6">
    <location>
        <begin position="45"/>
        <end position="49"/>
    </location>
</feature>
<feature type="strand" evidence="6">
    <location>
        <begin position="55"/>
        <end position="59"/>
    </location>
</feature>
<feature type="strand" evidence="6">
    <location>
        <begin position="68"/>
        <end position="75"/>
    </location>
</feature>
<feature type="helix" evidence="6">
    <location>
        <begin position="83"/>
        <end position="89"/>
    </location>
</feature>
<feature type="strand" evidence="6">
    <location>
        <begin position="96"/>
        <end position="99"/>
    </location>
</feature>
<feature type="strand" evidence="6">
    <location>
        <begin position="113"/>
        <end position="120"/>
    </location>
</feature>
<feature type="helix" evidence="6">
    <location>
        <begin position="121"/>
        <end position="123"/>
    </location>
</feature>
<feature type="helix" evidence="6">
    <location>
        <begin position="124"/>
        <end position="137"/>
    </location>
</feature>
<feature type="strand" evidence="6">
    <location>
        <begin position="139"/>
        <end position="149"/>
    </location>
</feature>
<feature type="helix" evidence="6">
    <location>
        <begin position="151"/>
        <end position="153"/>
    </location>
</feature>
<feature type="helix" evidence="6">
    <location>
        <begin position="157"/>
        <end position="161"/>
    </location>
</feature>
<feature type="turn" evidence="6">
    <location>
        <begin position="163"/>
        <end position="168"/>
    </location>
</feature>
<feature type="strand" evidence="6">
    <location>
        <begin position="169"/>
        <end position="173"/>
    </location>
</feature>
<feature type="helix" evidence="6">
    <location>
        <begin position="184"/>
        <end position="188"/>
    </location>
</feature>
<feature type="strand" evidence="6">
    <location>
        <begin position="195"/>
        <end position="201"/>
    </location>
</feature>
<feature type="helix" evidence="6">
    <location>
        <begin position="203"/>
        <end position="212"/>
    </location>
</feature>
<feature type="turn" evidence="6">
    <location>
        <begin position="213"/>
        <end position="215"/>
    </location>
</feature>
<feature type="strand" evidence="6">
    <location>
        <begin position="221"/>
        <end position="224"/>
    </location>
</feature>
<feature type="strand" evidence="6">
    <location>
        <begin position="239"/>
        <end position="243"/>
    </location>
</feature>
<feature type="turn" evidence="6">
    <location>
        <begin position="244"/>
        <end position="246"/>
    </location>
</feature>
<feature type="strand" evidence="6">
    <location>
        <begin position="249"/>
        <end position="252"/>
    </location>
</feature>
<feature type="helix" evidence="6">
    <location>
        <begin position="258"/>
        <end position="264"/>
    </location>
</feature>
<feature type="strand" evidence="6">
    <location>
        <begin position="274"/>
        <end position="278"/>
    </location>
</feature>
<feature type="strand" evidence="6">
    <location>
        <begin position="282"/>
        <end position="288"/>
    </location>
</feature>
<feature type="turn" evidence="6">
    <location>
        <begin position="299"/>
        <end position="304"/>
    </location>
</feature>
<feature type="strand" evidence="6">
    <location>
        <begin position="305"/>
        <end position="307"/>
    </location>
</feature>
<feature type="turn" evidence="6">
    <location>
        <begin position="308"/>
        <end position="310"/>
    </location>
</feature>
<feature type="strand" evidence="6">
    <location>
        <begin position="312"/>
        <end position="320"/>
    </location>
</feature>
<comment type="function">
    <text>Component of the electron transfer chain involved in pyridine nucleotide-dependent dihydroxylation of phthalate. Utilizes FMN to mediate electron transfer from the two-electron donor, NADH, to the one-electron acceptor, (2Fe-2S).</text>
</comment>
<comment type="cofactor">
    <cofactor evidence="3">
        <name>FMN</name>
        <dbReference type="ChEBI" id="CHEBI:58210"/>
    </cofactor>
</comment>
<comment type="subunit">
    <text>Monomer.</text>
</comment>
<comment type="similarity">
    <text evidence="4">Belongs to the PDR/VanB family.</text>
</comment>
<dbReference type="EC" id="1.-.-.-"/>
<dbReference type="EMBL" id="AF095748">
    <property type="protein sequence ID" value="AAD03550.1"/>
    <property type="molecule type" value="Genomic_DNA"/>
</dbReference>
<dbReference type="PIR" id="A44230">
    <property type="entry name" value="A44230"/>
</dbReference>
<dbReference type="PDB" id="2PIA">
    <property type="method" value="X-ray"/>
    <property type="resolution" value="2.00 A"/>
    <property type="chains" value="A=2-322"/>
</dbReference>
<dbReference type="PDBsum" id="2PIA"/>
<dbReference type="SMR" id="P33164"/>
<dbReference type="EvolutionaryTrace" id="P33164"/>
<dbReference type="GO" id="GO:0051537">
    <property type="term" value="F:2 iron, 2 sulfur cluster binding"/>
    <property type="evidence" value="ECO:0007669"/>
    <property type="project" value="UniProtKB-KW"/>
</dbReference>
<dbReference type="GO" id="GO:0046872">
    <property type="term" value="F:metal ion binding"/>
    <property type="evidence" value="ECO:0007669"/>
    <property type="project" value="UniProtKB-KW"/>
</dbReference>
<dbReference type="GO" id="GO:0016491">
    <property type="term" value="F:oxidoreductase activity"/>
    <property type="evidence" value="ECO:0007669"/>
    <property type="project" value="UniProtKB-KW"/>
</dbReference>
<dbReference type="CDD" id="cd00207">
    <property type="entry name" value="fer2"/>
    <property type="match status" value="1"/>
</dbReference>
<dbReference type="CDD" id="cd06185">
    <property type="entry name" value="PDR_like"/>
    <property type="match status" value="1"/>
</dbReference>
<dbReference type="Gene3D" id="3.10.20.30">
    <property type="match status" value="1"/>
</dbReference>
<dbReference type="Gene3D" id="3.40.50.80">
    <property type="entry name" value="Nucleotide-binding domain of ferredoxin-NADP reductase (FNR) module"/>
    <property type="match status" value="1"/>
</dbReference>
<dbReference type="Gene3D" id="2.40.30.10">
    <property type="entry name" value="Translation factors"/>
    <property type="match status" value="1"/>
</dbReference>
<dbReference type="InterPro" id="IPR036010">
    <property type="entry name" value="2Fe-2S_ferredoxin-like_sf"/>
</dbReference>
<dbReference type="InterPro" id="IPR001041">
    <property type="entry name" value="2Fe-2S_ferredoxin-type"/>
</dbReference>
<dbReference type="InterPro" id="IPR006058">
    <property type="entry name" value="2Fe2S_fd_BS"/>
</dbReference>
<dbReference type="InterPro" id="IPR012675">
    <property type="entry name" value="Beta-grasp_dom_sf"/>
</dbReference>
<dbReference type="InterPro" id="IPR017927">
    <property type="entry name" value="FAD-bd_FR_type"/>
</dbReference>
<dbReference type="InterPro" id="IPR039261">
    <property type="entry name" value="FNR_nucleotide-bd"/>
</dbReference>
<dbReference type="InterPro" id="IPR050415">
    <property type="entry name" value="MRET"/>
</dbReference>
<dbReference type="InterPro" id="IPR001433">
    <property type="entry name" value="OxRdtase_FAD/NAD-bd"/>
</dbReference>
<dbReference type="InterPro" id="IPR017938">
    <property type="entry name" value="Riboflavin_synthase-like_b-brl"/>
</dbReference>
<dbReference type="PANTHER" id="PTHR47354:SF1">
    <property type="entry name" value="CARNITINE MONOOXYGENASE REDUCTASE SUBUNIT"/>
    <property type="match status" value="1"/>
</dbReference>
<dbReference type="PANTHER" id="PTHR47354">
    <property type="entry name" value="NADH OXIDOREDUCTASE HCR"/>
    <property type="match status" value="1"/>
</dbReference>
<dbReference type="Pfam" id="PF00111">
    <property type="entry name" value="Fer2"/>
    <property type="match status" value="1"/>
</dbReference>
<dbReference type="Pfam" id="PF00175">
    <property type="entry name" value="NAD_binding_1"/>
    <property type="match status" value="1"/>
</dbReference>
<dbReference type="PRINTS" id="PR00409">
    <property type="entry name" value="PHDIOXRDTASE"/>
</dbReference>
<dbReference type="SUPFAM" id="SSF54292">
    <property type="entry name" value="2Fe-2S ferredoxin-like"/>
    <property type="match status" value="1"/>
</dbReference>
<dbReference type="SUPFAM" id="SSF52343">
    <property type="entry name" value="Ferredoxin reductase-like, C-terminal NADP-linked domain"/>
    <property type="match status" value="1"/>
</dbReference>
<dbReference type="SUPFAM" id="SSF63380">
    <property type="entry name" value="Riboflavin synthase domain-like"/>
    <property type="match status" value="1"/>
</dbReference>
<dbReference type="PROSITE" id="PS00197">
    <property type="entry name" value="2FE2S_FER_1"/>
    <property type="match status" value="1"/>
</dbReference>
<dbReference type="PROSITE" id="PS51085">
    <property type="entry name" value="2FE2S_FER_2"/>
    <property type="match status" value="1"/>
</dbReference>
<dbReference type="PROSITE" id="PS51384">
    <property type="entry name" value="FAD_FR"/>
    <property type="match status" value="1"/>
</dbReference>
<organism>
    <name type="scientific">Burkholderia cepacia</name>
    <name type="common">Pseudomonas cepacia</name>
    <dbReference type="NCBI Taxonomy" id="292"/>
    <lineage>
        <taxon>Bacteria</taxon>
        <taxon>Pseudomonadati</taxon>
        <taxon>Pseudomonadota</taxon>
        <taxon>Betaproteobacteria</taxon>
        <taxon>Burkholderiales</taxon>
        <taxon>Burkholderiaceae</taxon>
        <taxon>Burkholderia</taxon>
        <taxon>Burkholderia cepacia complex</taxon>
    </lineage>
</organism>
<name>PDR_BURCE</name>